<feature type="chain" id="PRO_0000169190" description="Probable membrane transporter protein HI_0198">
    <location>
        <begin position="1"/>
        <end position="255"/>
    </location>
</feature>
<feature type="transmembrane region" description="Helical" evidence="1">
    <location>
        <begin position="7"/>
        <end position="27"/>
    </location>
</feature>
<feature type="transmembrane region" description="Helical" evidence="1">
    <location>
        <begin position="28"/>
        <end position="48"/>
    </location>
</feature>
<feature type="transmembrane region" description="Helical" evidence="1">
    <location>
        <begin position="76"/>
        <end position="96"/>
    </location>
</feature>
<feature type="transmembrane region" description="Helical" evidence="1">
    <location>
        <begin position="99"/>
        <end position="119"/>
    </location>
</feature>
<feature type="transmembrane region" description="Helical" evidence="1">
    <location>
        <begin position="132"/>
        <end position="152"/>
    </location>
</feature>
<feature type="transmembrane region" description="Helical" evidence="1">
    <location>
        <begin position="153"/>
        <end position="173"/>
    </location>
</feature>
<feature type="transmembrane region" description="Helical" evidence="1">
    <location>
        <begin position="191"/>
        <end position="211"/>
    </location>
</feature>
<feature type="transmembrane region" description="Helical" evidence="1">
    <location>
        <begin position="235"/>
        <end position="255"/>
    </location>
</feature>
<keyword id="KW-1003">Cell membrane</keyword>
<keyword id="KW-0472">Membrane</keyword>
<keyword id="KW-1185">Reference proteome</keyword>
<keyword id="KW-0812">Transmembrane</keyword>
<keyword id="KW-1133">Transmembrane helix</keyword>
<keyword id="KW-0813">Transport</keyword>
<reference key="1">
    <citation type="journal article" date="1995" name="Science">
        <title>Whole-genome random sequencing and assembly of Haemophilus influenzae Rd.</title>
        <authorList>
            <person name="Fleischmann R.D."/>
            <person name="Adams M.D."/>
            <person name="White O."/>
            <person name="Clayton R.A."/>
            <person name="Kirkness E.F."/>
            <person name="Kerlavage A.R."/>
            <person name="Bult C.J."/>
            <person name="Tomb J.-F."/>
            <person name="Dougherty B.A."/>
            <person name="Merrick J.M."/>
            <person name="McKenney K."/>
            <person name="Sutton G.G."/>
            <person name="FitzHugh W."/>
            <person name="Fields C.A."/>
            <person name="Gocayne J.D."/>
            <person name="Scott J.D."/>
            <person name="Shirley R."/>
            <person name="Liu L.-I."/>
            <person name="Glodek A."/>
            <person name="Kelley J.M."/>
            <person name="Weidman J.F."/>
            <person name="Phillips C.A."/>
            <person name="Spriggs T."/>
            <person name="Hedblom E."/>
            <person name="Cotton M.D."/>
            <person name="Utterback T.R."/>
            <person name="Hanna M.C."/>
            <person name="Nguyen D.T."/>
            <person name="Saudek D.M."/>
            <person name="Brandon R.C."/>
            <person name="Fine L.D."/>
            <person name="Fritchman J.L."/>
            <person name="Fuhrmann J.L."/>
            <person name="Geoghagen N.S.M."/>
            <person name="Gnehm C.L."/>
            <person name="McDonald L.A."/>
            <person name="Small K.V."/>
            <person name="Fraser C.M."/>
            <person name="Smith H.O."/>
            <person name="Venter J.C."/>
        </authorList>
    </citation>
    <scope>NUCLEOTIDE SEQUENCE [LARGE SCALE GENOMIC DNA]</scope>
    <source>
        <strain>ATCC 51907 / DSM 11121 / KW20 / Rd</strain>
    </source>
</reference>
<reference key="2">
    <citation type="submission" date="1996-09" db="EMBL/GenBank/DDBJ databases">
        <authorList>
            <person name="White O."/>
            <person name="Clayton R.A."/>
            <person name="Kerlavage A.R."/>
            <person name="Fleischmann R.D."/>
        </authorList>
    </citation>
    <scope>SEQUENCE REVISION</scope>
</reference>
<accession>P46490</accession>
<evidence type="ECO:0000255" key="1"/>
<evidence type="ECO:0000305" key="2"/>
<sequence>MDIGIDLLAILFCVGFVASFIDAIAGGGGLITIPALLMTGMPPAMALGTNKLQAMGGALSASLYFLRKRAVNLRDIWFILIWVFLGSALGTLLIQSIDVAIFKKMLPFLILAIGLYFLFTPKLGDEDRKQRLSYLLFGLLVSPFLGFYDGFFGPGTGSIMSLACVTLLGFNLPKAAAHAKVMNFTSNLASFALFLLGGQILWKVGFVMMAGSILGANLGAKMVMTKGKTLIRPMVVIMSFMMTAKMVYDQGWFHF</sequence>
<gene>
    <name type="ordered locus">HI_0198</name>
</gene>
<dbReference type="EMBL" id="L42023">
    <property type="protein sequence ID" value="AAC21867.1"/>
    <property type="molecule type" value="Genomic_DNA"/>
</dbReference>
<dbReference type="RefSeq" id="NP_438367.1">
    <property type="nucleotide sequence ID" value="NC_000907.1"/>
</dbReference>
<dbReference type="STRING" id="71421.HI_0198"/>
<dbReference type="EnsemblBacteria" id="AAC21867">
    <property type="protein sequence ID" value="AAC21867"/>
    <property type="gene ID" value="HI_0198"/>
</dbReference>
<dbReference type="KEGG" id="hin:HI_0198"/>
<dbReference type="PATRIC" id="fig|71421.8.peg.203"/>
<dbReference type="eggNOG" id="COG0730">
    <property type="taxonomic scope" value="Bacteria"/>
</dbReference>
<dbReference type="HOGENOM" id="CLU_045498_2_1_6"/>
<dbReference type="OrthoDB" id="554695at2"/>
<dbReference type="PhylomeDB" id="P46490"/>
<dbReference type="BioCyc" id="HINF71421:G1GJ1-209-MONOMER"/>
<dbReference type="Proteomes" id="UP000000579">
    <property type="component" value="Chromosome"/>
</dbReference>
<dbReference type="GO" id="GO:0005886">
    <property type="term" value="C:plasma membrane"/>
    <property type="evidence" value="ECO:0007669"/>
    <property type="project" value="UniProtKB-SubCell"/>
</dbReference>
<dbReference type="InterPro" id="IPR002781">
    <property type="entry name" value="TM_pro_TauE-like"/>
</dbReference>
<dbReference type="InterPro" id="IPR052017">
    <property type="entry name" value="TSUP"/>
</dbReference>
<dbReference type="PANTHER" id="PTHR30269:SF0">
    <property type="entry name" value="MEMBRANE TRANSPORTER PROTEIN YFCA-RELATED"/>
    <property type="match status" value="1"/>
</dbReference>
<dbReference type="PANTHER" id="PTHR30269">
    <property type="entry name" value="TRANSMEMBRANE PROTEIN YFCA"/>
    <property type="match status" value="1"/>
</dbReference>
<dbReference type="Pfam" id="PF01925">
    <property type="entry name" value="TauE"/>
    <property type="match status" value="1"/>
</dbReference>
<organism>
    <name type="scientific">Haemophilus influenzae (strain ATCC 51907 / DSM 11121 / KW20 / Rd)</name>
    <dbReference type="NCBI Taxonomy" id="71421"/>
    <lineage>
        <taxon>Bacteria</taxon>
        <taxon>Pseudomonadati</taxon>
        <taxon>Pseudomonadota</taxon>
        <taxon>Gammaproteobacteria</taxon>
        <taxon>Pasteurellales</taxon>
        <taxon>Pasteurellaceae</taxon>
        <taxon>Haemophilus</taxon>
    </lineage>
</organism>
<protein>
    <recommendedName>
        <fullName>Probable membrane transporter protein HI_0198</fullName>
    </recommendedName>
</protein>
<name>Y198_HAEIN</name>
<proteinExistence type="inferred from homology"/>
<comment type="subcellular location">
    <subcellularLocation>
        <location evidence="2">Cell membrane</location>
        <topology evidence="2">Multi-pass membrane protein</topology>
    </subcellularLocation>
</comment>
<comment type="similarity">
    <text evidence="2">Belongs to the 4-toluene sulfonate uptake permease (TSUP) (TC 2.A.102) family.</text>
</comment>